<reference key="1">
    <citation type="journal article" date="2011" name="Appl. Environ. Microbiol.">
        <title>Genomic potential of Marinobacter aquaeolei, a biogeochemical 'opportunitroph'.</title>
        <authorList>
            <person name="Singer E."/>
            <person name="Webb E.A."/>
            <person name="Nelson W.C."/>
            <person name="Heidelberg J.F."/>
            <person name="Ivanova N."/>
            <person name="Pati A."/>
            <person name="Edwards K.J."/>
        </authorList>
    </citation>
    <scope>NUCLEOTIDE SEQUENCE [LARGE SCALE GENOMIC DNA]</scope>
    <source>
        <strain>ATCC 700491 / DSM 11845 / VT8</strain>
    </source>
</reference>
<organism>
    <name type="scientific">Marinobacter nauticus (strain ATCC 700491 / DSM 11845 / VT8)</name>
    <name type="common">Marinobacter aquaeolei</name>
    <dbReference type="NCBI Taxonomy" id="351348"/>
    <lineage>
        <taxon>Bacteria</taxon>
        <taxon>Pseudomonadati</taxon>
        <taxon>Pseudomonadota</taxon>
        <taxon>Gammaproteobacteria</taxon>
        <taxon>Pseudomonadales</taxon>
        <taxon>Marinobacteraceae</taxon>
        <taxon>Marinobacter</taxon>
    </lineage>
</organism>
<keyword id="KW-0687">Ribonucleoprotein</keyword>
<keyword id="KW-0689">Ribosomal protein</keyword>
<accession>A1TYD9</accession>
<protein>
    <recommendedName>
        <fullName evidence="1">Small ribosomal subunit protein bS21</fullName>
    </recommendedName>
    <alternativeName>
        <fullName evidence="2">30S ribosomal protein S21</fullName>
    </alternativeName>
</protein>
<feature type="chain" id="PRO_1000005136" description="Small ribosomal subunit protein bS21">
    <location>
        <begin position="1"/>
        <end position="71"/>
    </location>
</feature>
<sequence length="71" mass="8549">MPAVKVKENEPFDVALRRFKRSCEKAGVLSEVRRREHYEKPTAVRKRKAAAAVKRHLKKLQREQRKFERLY</sequence>
<name>RS21_MARN8</name>
<dbReference type="EMBL" id="CP000514">
    <property type="protein sequence ID" value="ABM17758.1"/>
    <property type="molecule type" value="Genomic_DNA"/>
</dbReference>
<dbReference type="RefSeq" id="WP_007153483.1">
    <property type="nucleotide sequence ID" value="NC_008740.1"/>
</dbReference>
<dbReference type="SMR" id="A1TYD9"/>
<dbReference type="STRING" id="351348.Maqu_0660"/>
<dbReference type="GeneID" id="94722460"/>
<dbReference type="KEGG" id="maq:Maqu_0660"/>
<dbReference type="eggNOG" id="COG0828">
    <property type="taxonomic scope" value="Bacteria"/>
</dbReference>
<dbReference type="HOGENOM" id="CLU_159258_1_0_6"/>
<dbReference type="OrthoDB" id="9799244at2"/>
<dbReference type="Proteomes" id="UP000000998">
    <property type="component" value="Chromosome"/>
</dbReference>
<dbReference type="GO" id="GO:1990904">
    <property type="term" value="C:ribonucleoprotein complex"/>
    <property type="evidence" value="ECO:0007669"/>
    <property type="project" value="UniProtKB-KW"/>
</dbReference>
<dbReference type="GO" id="GO:0005840">
    <property type="term" value="C:ribosome"/>
    <property type="evidence" value="ECO:0007669"/>
    <property type="project" value="UniProtKB-KW"/>
</dbReference>
<dbReference type="GO" id="GO:0003735">
    <property type="term" value="F:structural constituent of ribosome"/>
    <property type="evidence" value="ECO:0007669"/>
    <property type="project" value="InterPro"/>
</dbReference>
<dbReference type="GO" id="GO:0006412">
    <property type="term" value="P:translation"/>
    <property type="evidence" value="ECO:0007669"/>
    <property type="project" value="UniProtKB-UniRule"/>
</dbReference>
<dbReference type="Gene3D" id="1.20.5.1150">
    <property type="entry name" value="Ribosomal protein S8"/>
    <property type="match status" value="1"/>
</dbReference>
<dbReference type="HAMAP" id="MF_00358">
    <property type="entry name" value="Ribosomal_bS21"/>
    <property type="match status" value="1"/>
</dbReference>
<dbReference type="InterPro" id="IPR001911">
    <property type="entry name" value="Ribosomal_bS21"/>
</dbReference>
<dbReference type="InterPro" id="IPR018278">
    <property type="entry name" value="Ribosomal_bS21_CS"/>
</dbReference>
<dbReference type="InterPro" id="IPR038380">
    <property type="entry name" value="Ribosomal_bS21_sf"/>
</dbReference>
<dbReference type="NCBIfam" id="TIGR00030">
    <property type="entry name" value="S21p"/>
    <property type="match status" value="1"/>
</dbReference>
<dbReference type="PANTHER" id="PTHR21109">
    <property type="entry name" value="MITOCHONDRIAL 28S RIBOSOMAL PROTEIN S21"/>
    <property type="match status" value="1"/>
</dbReference>
<dbReference type="PANTHER" id="PTHR21109:SF22">
    <property type="entry name" value="SMALL RIBOSOMAL SUBUNIT PROTEIN BS21"/>
    <property type="match status" value="1"/>
</dbReference>
<dbReference type="Pfam" id="PF01165">
    <property type="entry name" value="Ribosomal_S21"/>
    <property type="match status" value="1"/>
</dbReference>
<dbReference type="PRINTS" id="PR00976">
    <property type="entry name" value="RIBOSOMALS21"/>
</dbReference>
<dbReference type="PROSITE" id="PS01181">
    <property type="entry name" value="RIBOSOMAL_S21"/>
    <property type="match status" value="1"/>
</dbReference>
<evidence type="ECO:0000255" key="1">
    <source>
        <dbReference type="HAMAP-Rule" id="MF_00358"/>
    </source>
</evidence>
<evidence type="ECO:0000305" key="2"/>
<proteinExistence type="inferred from homology"/>
<gene>
    <name evidence="1" type="primary">rpsU</name>
    <name type="ordered locus">Maqu_0660</name>
</gene>
<comment type="similarity">
    <text evidence="1">Belongs to the bacterial ribosomal protein bS21 family.</text>
</comment>